<organism>
    <name type="scientific">Arabidopsis thaliana</name>
    <name type="common">Mouse-ear cress</name>
    <dbReference type="NCBI Taxonomy" id="3702"/>
    <lineage>
        <taxon>Eukaryota</taxon>
        <taxon>Viridiplantae</taxon>
        <taxon>Streptophyta</taxon>
        <taxon>Embryophyta</taxon>
        <taxon>Tracheophyta</taxon>
        <taxon>Spermatophyta</taxon>
        <taxon>Magnoliopsida</taxon>
        <taxon>eudicotyledons</taxon>
        <taxon>Gunneridae</taxon>
        <taxon>Pentapetalae</taxon>
        <taxon>rosids</taxon>
        <taxon>malvids</taxon>
        <taxon>Brassicales</taxon>
        <taxon>Brassicaceae</taxon>
        <taxon>Camelineae</taxon>
        <taxon>Arabidopsis</taxon>
    </lineage>
</organism>
<comment type="interaction">
    <interactant intactId="EBI-17091580">
        <id>Q8H1R4</id>
    </interactant>
    <interactant intactId="EBI-4464299">
        <id>Q9C826</id>
        <label>ABA2</label>
    </interactant>
    <organismsDiffer>false</organismsDiffer>
    <experiments>3</experiments>
</comment>
<comment type="similarity">
    <text evidence="2">Belongs to the ABC transporter superfamily. ABCI family.</text>
</comment>
<comment type="sequence caution" evidence="2">
    <conflict type="erroneous gene model prediction">
        <sequence resource="EMBL-CDS" id="CAB38804"/>
    </conflict>
</comment>
<comment type="sequence caution" evidence="2">
    <conflict type="erroneous gene model prediction">
        <sequence resource="EMBL-CDS" id="CAB80063"/>
    </conflict>
</comment>
<protein>
    <recommendedName>
        <fullName>ABC transporter I family member 10</fullName>
        <shortName>ABC transporter ABCI.10</shortName>
        <shortName>AtABCI10</shortName>
    </recommendedName>
    <alternativeName>
        <fullName>Non-intrinsic ABC protein 13</fullName>
    </alternativeName>
    <alternativeName>
        <fullName>Protein EMBRYO DEFECTIVE 2751</fullName>
    </alternativeName>
</protein>
<sequence>MNGHCLFAASPPRLFPLRSISSSVSPSGSYRIKFSDNVAVECRNLCFSVSTRQGISVPILRDCSFRIPSGQLWMILGPNGCGKSTLLKILAGVVNPSSGTVFVEKPKNFVFQNPDHQVVMPTVEADVAFGLGKYHDMNQEEVKSRVIKALEAVGMRDYMQRPIQTLSGGQKQRIAIAGALAEACKVLLLDELTTFLDESDQMGVIKAVKDLINAKKGDVTALWVTHRLEELKYADGAVYMENGRVVRHGDAATISDFIKAKQSSYIDQIGS</sequence>
<feature type="chain" id="PRO_0000250664" description="ABC transporter I family member 10">
    <location>
        <begin position="1"/>
        <end position="271"/>
    </location>
</feature>
<feature type="domain" description="ABC transporter" evidence="1">
    <location>
        <begin position="40"/>
        <end position="267"/>
    </location>
</feature>
<feature type="binding site" evidence="1">
    <location>
        <begin position="77"/>
        <end position="84"/>
    </location>
    <ligand>
        <name>ATP</name>
        <dbReference type="ChEBI" id="CHEBI:30616"/>
    </ligand>
</feature>
<keyword id="KW-0067">ATP-binding</keyword>
<keyword id="KW-0547">Nucleotide-binding</keyword>
<keyword id="KW-1185">Reference proteome</keyword>
<keyword id="KW-0813">Transport</keyword>
<dbReference type="EMBL" id="AL035678">
    <property type="protein sequence ID" value="CAB38804.1"/>
    <property type="status" value="ALT_SEQ"/>
    <property type="molecule type" value="Genomic_DNA"/>
</dbReference>
<dbReference type="EMBL" id="AL161583">
    <property type="protein sequence ID" value="CAB80063.1"/>
    <property type="status" value="ALT_SEQ"/>
    <property type="molecule type" value="Genomic_DNA"/>
</dbReference>
<dbReference type="EMBL" id="CP002687">
    <property type="protein sequence ID" value="AEE86227.1"/>
    <property type="molecule type" value="Genomic_DNA"/>
</dbReference>
<dbReference type="EMBL" id="AY142518">
    <property type="protein sequence ID" value="AAN13061.1"/>
    <property type="molecule type" value="mRNA"/>
</dbReference>
<dbReference type="EMBL" id="BT010649">
    <property type="protein sequence ID" value="AAQ89671.1"/>
    <property type="molecule type" value="mRNA"/>
</dbReference>
<dbReference type="EMBL" id="AK220760">
    <property type="protein sequence ID" value="BAD93954.1"/>
    <property type="molecule type" value="mRNA"/>
</dbReference>
<dbReference type="PIR" id="T05997">
    <property type="entry name" value="T05997"/>
</dbReference>
<dbReference type="RefSeq" id="NP_195072.2">
    <property type="nucleotide sequence ID" value="NM_119500.6"/>
</dbReference>
<dbReference type="SMR" id="Q8H1R4"/>
<dbReference type="BioGRID" id="14767">
    <property type="interactions" value="2"/>
</dbReference>
<dbReference type="FunCoup" id="Q8H1R4">
    <property type="interactions" value="75"/>
</dbReference>
<dbReference type="IntAct" id="Q8H1R4">
    <property type="interactions" value="2"/>
</dbReference>
<dbReference type="STRING" id="3702.Q8H1R4"/>
<dbReference type="TCDB" id="3.A.1.26.12">
    <property type="family name" value="the atp-binding cassette (abc) superfamily"/>
</dbReference>
<dbReference type="PaxDb" id="3702-AT4G33460.1"/>
<dbReference type="ProteomicsDB" id="245151"/>
<dbReference type="EnsemblPlants" id="AT4G33460.1">
    <property type="protein sequence ID" value="AT4G33460.1"/>
    <property type="gene ID" value="AT4G33460"/>
</dbReference>
<dbReference type="GeneID" id="829483"/>
<dbReference type="Gramene" id="AT4G33460.1">
    <property type="protein sequence ID" value="AT4G33460.1"/>
    <property type="gene ID" value="AT4G33460"/>
</dbReference>
<dbReference type="KEGG" id="ath:AT4G33460"/>
<dbReference type="Araport" id="AT4G33460"/>
<dbReference type="TAIR" id="AT4G33460">
    <property type="gene designation" value="ABCI10"/>
</dbReference>
<dbReference type="eggNOG" id="KOG0055">
    <property type="taxonomic scope" value="Eukaryota"/>
</dbReference>
<dbReference type="HOGENOM" id="CLU_000604_1_22_1"/>
<dbReference type="InParanoid" id="Q8H1R4"/>
<dbReference type="OMA" id="TALWITH"/>
<dbReference type="OrthoDB" id="6500128at2759"/>
<dbReference type="PhylomeDB" id="Q8H1R4"/>
<dbReference type="PRO" id="PR:Q8H1R4"/>
<dbReference type="Proteomes" id="UP000006548">
    <property type="component" value="Chromosome 4"/>
</dbReference>
<dbReference type="ExpressionAtlas" id="Q8H1R4">
    <property type="expression patterns" value="baseline and differential"/>
</dbReference>
<dbReference type="GO" id="GO:0009941">
    <property type="term" value="C:chloroplast envelope"/>
    <property type="evidence" value="ECO:0007005"/>
    <property type="project" value="TAIR"/>
</dbReference>
<dbReference type="GO" id="GO:0009706">
    <property type="term" value="C:chloroplast inner membrane"/>
    <property type="evidence" value="ECO:0000314"/>
    <property type="project" value="TAIR"/>
</dbReference>
<dbReference type="GO" id="GO:0005524">
    <property type="term" value="F:ATP binding"/>
    <property type="evidence" value="ECO:0007669"/>
    <property type="project" value="UniProtKB-KW"/>
</dbReference>
<dbReference type="GO" id="GO:0016887">
    <property type="term" value="F:ATP hydrolysis activity"/>
    <property type="evidence" value="ECO:0007669"/>
    <property type="project" value="InterPro"/>
</dbReference>
<dbReference type="GO" id="GO:0009658">
    <property type="term" value="P:chloroplast organization"/>
    <property type="evidence" value="ECO:0000315"/>
    <property type="project" value="TAIR"/>
</dbReference>
<dbReference type="GO" id="GO:0055085">
    <property type="term" value="P:transmembrane transport"/>
    <property type="evidence" value="ECO:0007669"/>
    <property type="project" value="InterPro"/>
</dbReference>
<dbReference type="CDD" id="cd03225">
    <property type="entry name" value="ABC_cobalt_CbiO_domain1"/>
    <property type="match status" value="1"/>
</dbReference>
<dbReference type="FunFam" id="3.40.50.300:FF:001360">
    <property type="entry name" value="ABC transporter I family member 10"/>
    <property type="match status" value="1"/>
</dbReference>
<dbReference type="Gene3D" id="3.40.50.300">
    <property type="entry name" value="P-loop containing nucleotide triphosphate hydrolases"/>
    <property type="match status" value="1"/>
</dbReference>
<dbReference type="InterPro" id="IPR003593">
    <property type="entry name" value="AAA+_ATPase"/>
</dbReference>
<dbReference type="InterPro" id="IPR003439">
    <property type="entry name" value="ABC_transporter-like_ATP-bd"/>
</dbReference>
<dbReference type="InterPro" id="IPR017871">
    <property type="entry name" value="ABC_transporter-like_CS"/>
</dbReference>
<dbReference type="InterPro" id="IPR015856">
    <property type="entry name" value="ABC_transpr_CbiO/EcfA_su"/>
</dbReference>
<dbReference type="InterPro" id="IPR050334">
    <property type="entry name" value="Molybdenum_import_ModC"/>
</dbReference>
<dbReference type="InterPro" id="IPR027417">
    <property type="entry name" value="P-loop_NTPase"/>
</dbReference>
<dbReference type="PANTHER" id="PTHR43514">
    <property type="entry name" value="ABC TRANSPORTER I FAMILY MEMBER 10"/>
    <property type="match status" value="1"/>
</dbReference>
<dbReference type="PANTHER" id="PTHR43514:SF4">
    <property type="entry name" value="ABC TRANSPORTER I FAMILY MEMBER 10"/>
    <property type="match status" value="1"/>
</dbReference>
<dbReference type="Pfam" id="PF00005">
    <property type="entry name" value="ABC_tran"/>
    <property type="match status" value="1"/>
</dbReference>
<dbReference type="SMART" id="SM00382">
    <property type="entry name" value="AAA"/>
    <property type="match status" value="1"/>
</dbReference>
<dbReference type="SUPFAM" id="SSF52540">
    <property type="entry name" value="P-loop containing nucleoside triphosphate hydrolases"/>
    <property type="match status" value="1"/>
</dbReference>
<dbReference type="PROSITE" id="PS00211">
    <property type="entry name" value="ABC_TRANSPORTER_1"/>
    <property type="match status" value="1"/>
</dbReference>
<dbReference type="PROSITE" id="PS50893">
    <property type="entry name" value="ABC_TRANSPORTER_2"/>
    <property type="match status" value="1"/>
</dbReference>
<evidence type="ECO:0000255" key="1">
    <source>
        <dbReference type="PROSITE-ProRule" id="PRU00434"/>
    </source>
</evidence>
<evidence type="ECO:0000305" key="2"/>
<reference key="1">
    <citation type="journal article" date="1999" name="Nature">
        <title>Sequence and analysis of chromosome 4 of the plant Arabidopsis thaliana.</title>
        <authorList>
            <person name="Mayer K.F.X."/>
            <person name="Schueller C."/>
            <person name="Wambutt R."/>
            <person name="Murphy G."/>
            <person name="Volckaert G."/>
            <person name="Pohl T."/>
            <person name="Duesterhoeft A."/>
            <person name="Stiekema W."/>
            <person name="Entian K.-D."/>
            <person name="Terryn N."/>
            <person name="Harris B."/>
            <person name="Ansorge W."/>
            <person name="Brandt P."/>
            <person name="Grivell L.A."/>
            <person name="Rieger M."/>
            <person name="Weichselgartner M."/>
            <person name="de Simone V."/>
            <person name="Obermaier B."/>
            <person name="Mache R."/>
            <person name="Mueller M."/>
            <person name="Kreis M."/>
            <person name="Delseny M."/>
            <person name="Puigdomenech P."/>
            <person name="Watson M."/>
            <person name="Schmidtheini T."/>
            <person name="Reichert B."/>
            <person name="Portetelle D."/>
            <person name="Perez-Alonso M."/>
            <person name="Boutry M."/>
            <person name="Bancroft I."/>
            <person name="Vos P."/>
            <person name="Hoheisel J."/>
            <person name="Zimmermann W."/>
            <person name="Wedler H."/>
            <person name="Ridley P."/>
            <person name="Langham S.-A."/>
            <person name="McCullagh B."/>
            <person name="Bilham L."/>
            <person name="Robben J."/>
            <person name="van der Schueren J."/>
            <person name="Grymonprez B."/>
            <person name="Chuang Y.-J."/>
            <person name="Vandenbussche F."/>
            <person name="Braeken M."/>
            <person name="Weltjens I."/>
            <person name="Voet M."/>
            <person name="Bastiaens I."/>
            <person name="Aert R."/>
            <person name="Defoor E."/>
            <person name="Weitzenegger T."/>
            <person name="Bothe G."/>
            <person name="Ramsperger U."/>
            <person name="Hilbert H."/>
            <person name="Braun M."/>
            <person name="Holzer E."/>
            <person name="Brandt A."/>
            <person name="Peters S."/>
            <person name="van Staveren M."/>
            <person name="Dirkse W."/>
            <person name="Mooijman P."/>
            <person name="Klein Lankhorst R."/>
            <person name="Rose M."/>
            <person name="Hauf J."/>
            <person name="Koetter P."/>
            <person name="Berneiser S."/>
            <person name="Hempel S."/>
            <person name="Feldpausch M."/>
            <person name="Lamberth S."/>
            <person name="Van den Daele H."/>
            <person name="De Keyser A."/>
            <person name="Buysshaert C."/>
            <person name="Gielen J."/>
            <person name="Villarroel R."/>
            <person name="De Clercq R."/>
            <person name="van Montagu M."/>
            <person name="Rogers J."/>
            <person name="Cronin A."/>
            <person name="Quail M.A."/>
            <person name="Bray-Allen S."/>
            <person name="Clark L."/>
            <person name="Doggett J."/>
            <person name="Hall S."/>
            <person name="Kay M."/>
            <person name="Lennard N."/>
            <person name="McLay K."/>
            <person name="Mayes R."/>
            <person name="Pettett A."/>
            <person name="Rajandream M.A."/>
            <person name="Lyne M."/>
            <person name="Benes V."/>
            <person name="Rechmann S."/>
            <person name="Borkova D."/>
            <person name="Bloecker H."/>
            <person name="Scharfe M."/>
            <person name="Grimm M."/>
            <person name="Loehnert T.-H."/>
            <person name="Dose S."/>
            <person name="de Haan M."/>
            <person name="Maarse A.C."/>
            <person name="Schaefer M."/>
            <person name="Mueller-Auer S."/>
            <person name="Gabel C."/>
            <person name="Fuchs M."/>
            <person name="Fartmann B."/>
            <person name="Granderath K."/>
            <person name="Dauner D."/>
            <person name="Herzl A."/>
            <person name="Neumann S."/>
            <person name="Argiriou A."/>
            <person name="Vitale D."/>
            <person name="Liguori R."/>
            <person name="Piravandi E."/>
            <person name="Massenet O."/>
            <person name="Quigley F."/>
            <person name="Clabauld G."/>
            <person name="Muendlein A."/>
            <person name="Felber R."/>
            <person name="Schnabl S."/>
            <person name="Hiller R."/>
            <person name="Schmidt W."/>
            <person name="Lecharny A."/>
            <person name="Aubourg S."/>
            <person name="Chefdor F."/>
            <person name="Cooke R."/>
            <person name="Berger C."/>
            <person name="Monfort A."/>
            <person name="Casacuberta E."/>
            <person name="Gibbons T."/>
            <person name="Weber N."/>
            <person name="Vandenbol M."/>
            <person name="Bargues M."/>
            <person name="Terol J."/>
            <person name="Torres A."/>
            <person name="Perez-Perez A."/>
            <person name="Purnelle B."/>
            <person name="Bent E."/>
            <person name="Johnson S."/>
            <person name="Tacon D."/>
            <person name="Jesse T."/>
            <person name="Heijnen L."/>
            <person name="Schwarz S."/>
            <person name="Scholler P."/>
            <person name="Heber S."/>
            <person name="Francs P."/>
            <person name="Bielke C."/>
            <person name="Frishman D."/>
            <person name="Haase D."/>
            <person name="Lemcke K."/>
            <person name="Mewes H.-W."/>
            <person name="Stocker S."/>
            <person name="Zaccaria P."/>
            <person name="Bevan M."/>
            <person name="Wilson R.K."/>
            <person name="de la Bastide M."/>
            <person name="Habermann K."/>
            <person name="Parnell L."/>
            <person name="Dedhia N."/>
            <person name="Gnoj L."/>
            <person name="Schutz K."/>
            <person name="Huang E."/>
            <person name="Spiegel L."/>
            <person name="Sekhon M."/>
            <person name="Murray J."/>
            <person name="Sheet P."/>
            <person name="Cordes M."/>
            <person name="Abu-Threideh J."/>
            <person name="Stoneking T."/>
            <person name="Kalicki J."/>
            <person name="Graves T."/>
            <person name="Harmon G."/>
            <person name="Edwards J."/>
            <person name="Latreille P."/>
            <person name="Courtney L."/>
            <person name="Cloud J."/>
            <person name="Abbott A."/>
            <person name="Scott K."/>
            <person name="Johnson D."/>
            <person name="Minx P."/>
            <person name="Bentley D."/>
            <person name="Fulton B."/>
            <person name="Miller N."/>
            <person name="Greco T."/>
            <person name="Kemp K."/>
            <person name="Kramer J."/>
            <person name="Fulton L."/>
            <person name="Mardis E."/>
            <person name="Dante M."/>
            <person name="Pepin K."/>
            <person name="Hillier L.W."/>
            <person name="Nelson J."/>
            <person name="Spieth J."/>
            <person name="Ryan E."/>
            <person name="Andrews S."/>
            <person name="Geisel C."/>
            <person name="Layman D."/>
            <person name="Du H."/>
            <person name="Ali J."/>
            <person name="Berghoff A."/>
            <person name="Jones K."/>
            <person name="Drone K."/>
            <person name="Cotton M."/>
            <person name="Joshu C."/>
            <person name="Antonoiu B."/>
            <person name="Zidanic M."/>
            <person name="Strong C."/>
            <person name="Sun H."/>
            <person name="Lamar B."/>
            <person name="Yordan C."/>
            <person name="Ma P."/>
            <person name="Zhong J."/>
            <person name="Preston R."/>
            <person name="Vil D."/>
            <person name="Shekher M."/>
            <person name="Matero A."/>
            <person name="Shah R."/>
            <person name="Swaby I.K."/>
            <person name="O'Shaughnessy A."/>
            <person name="Rodriguez M."/>
            <person name="Hoffman J."/>
            <person name="Till S."/>
            <person name="Granat S."/>
            <person name="Shohdy N."/>
            <person name="Hasegawa A."/>
            <person name="Hameed A."/>
            <person name="Lodhi M."/>
            <person name="Johnson A."/>
            <person name="Chen E."/>
            <person name="Marra M.A."/>
            <person name="Martienssen R."/>
            <person name="McCombie W.R."/>
        </authorList>
    </citation>
    <scope>NUCLEOTIDE SEQUENCE [LARGE SCALE GENOMIC DNA]</scope>
    <source>
        <strain>cv. Columbia</strain>
    </source>
</reference>
<reference key="2">
    <citation type="journal article" date="2017" name="Plant J.">
        <title>Araport11: a complete reannotation of the Arabidopsis thaliana reference genome.</title>
        <authorList>
            <person name="Cheng C.Y."/>
            <person name="Krishnakumar V."/>
            <person name="Chan A.P."/>
            <person name="Thibaud-Nissen F."/>
            <person name="Schobel S."/>
            <person name="Town C.D."/>
        </authorList>
    </citation>
    <scope>GENOME REANNOTATION</scope>
    <source>
        <strain>cv. Columbia</strain>
    </source>
</reference>
<reference key="3">
    <citation type="journal article" date="2003" name="Science">
        <title>Empirical analysis of transcriptional activity in the Arabidopsis genome.</title>
        <authorList>
            <person name="Yamada K."/>
            <person name="Lim J."/>
            <person name="Dale J.M."/>
            <person name="Chen H."/>
            <person name="Shinn P."/>
            <person name="Palm C.J."/>
            <person name="Southwick A.M."/>
            <person name="Wu H.C."/>
            <person name="Kim C.J."/>
            <person name="Nguyen M."/>
            <person name="Pham P.K."/>
            <person name="Cheuk R.F."/>
            <person name="Karlin-Newmann G."/>
            <person name="Liu S.X."/>
            <person name="Lam B."/>
            <person name="Sakano H."/>
            <person name="Wu T."/>
            <person name="Yu G."/>
            <person name="Miranda M."/>
            <person name="Quach H.L."/>
            <person name="Tripp M."/>
            <person name="Chang C.H."/>
            <person name="Lee J.M."/>
            <person name="Toriumi M.J."/>
            <person name="Chan M.M."/>
            <person name="Tang C.C."/>
            <person name="Onodera C.S."/>
            <person name="Deng J.M."/>
            <person name="Akiyama K."/>
            <person name="Ansari Y."/>
            <person name="Arakawa T."/>
            <person name="Banh J."/>
            <person name="Banno F."/>
            <person name="Bowser L."/>
            <person name="Brooks S.Y."/>
            <person name="Carninci P."/>
            <person name="Chao Q."/>
            <person name="Choy N."/>
            <person name="Enju A."/>
            <person name="Goldsmith A.D."/>
            <person name="Gurjal M."/>
            <person name="Hansen N.F."/>
            <person name="Hayashizaki Y."/>
            <person name="Johnson-Hopson C."/>
            <person name="Hsuan V.W."/>
            <person name="Iida K."/>
            <person name="Karnes M."/>
            <person name="Khan S."/>
            <person name="Koesema E."/>
            <person name="Ishida J."/>
            <person name="Jiang P.X."/>
            <person name="Jones T."/>
            <person name="Kawai J."/>
            <person name="Kamiya A."/>
            <person name="Meyers C."/>
            <person name="Nakajima M."/>
            <person name="Narusaka M."/>
            <person name="Seki M."/>
            <person name="Sakurai T."/>
            <person name="Satou M."/>
            <person name="Tamse R."/>
            <person name="Vaysberg M."/>
            <person name="Wallender E.K."/>
            <person name="Wong C."/>
            <person name="Yamamura Y."/>
            <person name="Yuan S."/>
            <person name="Shinozaki K."/>
            <person name="Davis R.W."/>
            <person name="Theologis A."/>
            <person name="Ecker J.R."/>
        </authorList>
    </citation>
    <scope>NUCLEOTIDE SEQUENCE [LARGE SCALE MRNA]</scope>
    <source>
        <strain>cv. Columbia</strain>
    </source>
</reference>
<reference key="4">
    <citation type="submission" date="2003-10" db="EMBL/GenBank/DDBJ databases">
        <title>Arabidopsis ORF clones.</title>
        <authorList>
            <person name="Cheuk R.F."/>
            <person name="Chen H."/>
            <person name="Kim C.J."/>
            <person name="Shinn P."/>
            <person name="Carninci P."/>
            <person name="Hayashizaki Y."/>
            <person name="Ishida J."/>
            <person name="Kamiya A."/>
            <person name="Kawai J."/>
            <person name="Narusaka M."/>
            <person name="Sakurai T."/>
            <person name="Satou M."/>
            <person name="Seki M."/>
            <person name="Shinozaki K."/>
            <person name="Ecker J.R."/>
        </authorList>
    </citation>
    <scope>NUCLEOTIDE SEQUENCE [LARGE SCALE MRNA]</scope>
    <source>
        <strain>cv. Columbia</strain>
    </source>
</reference>
<reference key="5">
    <citation type="submission" date="2005-03" db="EMBL/GenBank/DDBJ databases">
        <title>Large-scale analysis of RIKEN Arabidopsis full-length (RAFL) cDNAs.</title>
        <authorList>
            <person name="Totoki Y."/>
            <person name="Seki M."/>
            <person name="Ishida J."/>
            <person name="Nakajima M."/>
            <person name="Enju A."/>
            <person name="Kamiya A."/>
            <person name="Narusaka M."/>
            <person name="Shin-i T."/>
            <person name="Nakagawa M."/>
            <person name="Sakamoto N."/>
            <person name="Oishi K."/>
            <person name="Kohara Y."/>
            <person name="Kobayashi M."/>
            <person name="Toyoda A."/>
            <person name="Sakaki Y."/>
            <person name="Sakurai T."/>
            <person name="Iida K."/>
            <person name="Akiyama K."/>
            <person name="Satou M."/>
            <person name="Toyoda T."/>
            <person name="Konagaya A."/>
            <person name="Carninci P."/>
            <person name="Kawai J."/>
            <person name="Hayashizaki Y."/>
            <person name="Shinozaki K."/>
        </authorList>
    </citation>
    <scope>NUCLEOTIDE SEQUENCE [LARGE SCALE MRNA]</scope>
    <source>
        <strain>cv. Columbia</strain>
    </source>
</reference>
<reference key="6">
    <citation type="journal article" date="2001" name="J. Biol. Chem.">
        <title>The Arabidopsis thaliana ABC protein superfamily, a complete inventory.</title>
        <authorList>
            <person name="Sanchez-Fernandez R."/>
            <person name="Davies T.G."/>
            <person name="Coleman J.O."/>
            <person name="Rea P.A."/>
        </authorList>
    </citation>
    <scope>GENE FAMILY</scope>
    <scope>NOMENCLATURE</scope>
</reference>
<reference key="7">
    <citation type="journal article" date="2008" name="Trends Plant Sci.">
        <title>Plant ABC proteins - a unified nomenclature and updated inventory.</title>
        <authorList>
            <person name="Verrier P.J."/>
            <person name="Bird D."/>
            <person name="Burla B."/>
            <person name="Dassa E."/>
            <person name="Forestier C."/>
            <person name="Geisler M."/>
            <person name="Klein M."/>
            <person name="Kolukisaoglu H.U."/>
            <person name="Lee Y."/>
            <person name="Martinoia E."/>
            <person name="Murphy A."/>
            <person name="Rea P.A."/>
            <person name="Samuels L."/>
            <person name="Schulz B."/>
            <person name="Spalding E.J."/>
            <person name="Yazaki K."/>
            <person name="Theodoulou F.L."/>
        </authorList>
    </citation>
    <scope>GENE FAMILY</scope>
    <scope>NOMENCLATURE</scope>
</reference>
<accession>Q8H1R4</accession>
<accession>Q9SZC3</accession>
<name>AB10I_ARATH</name>
<gene>
    <name type="primary">ABCI10</name>
    <name type="synonym">EMB2751</name>
    <name type="synonym">NAP13</name>
    <name type="ordered locus">At4g33460</name>
    <name type="ORF">F17M5.220</name>
</gene>
<proteinExistence type="evidence at protein level"/>